<feature type="chain" id="PRO_1000086947" description="NADH-quinone oxidoreductase subunit H">
    <location>
        <begin position="1"/>
        <end position="339"/>
    </location>
</feature>
<feature type="transmembrane region" description="Helical" evidence="1">
    <location>
        <begin position="9"/>
        <end position="29"/>
    </location>
</feature>
<feature type="transmembrane region" description="Helical" evidence="1">
    <location>
        <begin position="50"/>
        <end position="70"/>
    </location>
</feature>
<feature type="transmembrane region" description="Helical" evidence="1">
    <location>
        <begin position="82"/>
        <end position="102"/>
    </location>
</feature>
<feature type="transmembrane region" description="Helical" evidence="1">
    <location>
        <begin position="115"/>
        <end position="135"/>
    </location>
</feature>
<feature type="transmembrane region" description="Helical" evidence="1">
    <location>
        <begin position="161"/>
        <end position="181"/>
    </location>
</feature>
<feature type="transmembrane region" description="Helical" evidence="1">
    <location>
        <begin position="187"/>
        <end position="207"/>
    </location>
</feature>
<feature type="transmembrane region" description="Helical" evidence="1">
    <location>
        <begin position="235"/>
        <end position="255"/>
    </location>
</feature>
<feature type="transmembrane region" description="Helical" evidence="1">
    <location>
        <begin position="275"/>
        <end position="295"/>
    </location>
</feature>
<feature type="transmembrane region" description="Helical" evidence="1">
    <location>
        <begin position="311"/>
        <end position="331"/>
    </location>
</feature>
<accession>B0BVB1</accession>
<keyword id="KW-0997">Cell inner membrane</keyword>
<keyword id="KW-1003">Cell membrane</keyword>
<keyword id="KW-0472">Membrane</keyword>
<keyword id="KW-0520">NAD</keyword>
<keyword id="KW-0874">Quinone</keyword>
<keyword id="KW-1278">Translocase</keyword>
<keyword id="KW-0812">Transmembrane</keyword>
<keyword id="KW-1133">Transmembrane helix</keyword>
<keyword id="KW-0830">Ubiquinone</keyword>
<name>NUOH_RICRO</name>
<reference key="1">
    <citation type="journal article" date="2008" name="Infect. Immun.">
        <title>Genomic comparison of virulent Rickettsia rickettsii Sheila Smith and avirulent Rickettsia rickettsii Iowa.</title>
        <authorList>
            <person name="Ellison D.W."/>
            <person name="Clark T.R."/>
            <person name="Sturdevant D.E."/>
            <person name="Virtaneva K."/>
            <person name="Porcella S.F."/>
            <person name="Hackstadt T."/>
        </authorList>
    </citation>
    <scope>NUCLEOTIDE SEQUENCE [LARGE SCALE GENOMIC DNA]</scope>
    <source>
        <strain>Iowa</strain>
    </source>
</reference>
<sequence length="339" mass="38054">MLELFFEYIFPLIIIALKVVAITIPLILCVAYLTYAERRVIGLMQLRRGPNVVGPFGLLQPIADAVKLLFKEPIIPTNADKILFILAPMITFILSLIGWAVIPFAKGVVLADINVGVLYILAISSLSVYGIIIAGWASNSKYAFLGAIRSSAQMISYEVSMGLVIITVLLTTGTLNLSEIIEAQRTIPWWIDLMLLPMGVVFFISVLAETNRLPFDLPEAESELVAGYNVEYSSMGFALFFLGEYANMILVSAMTTTFFLGGYLPPFNISWLDCIPGFFWFVFKVGFLLFCFLWIRATLPRYRYDQLMRLGWKVFLPLTLFWVVLVSSVLVYTDNLPSI</sequence>
<dbReference type="EC" id="7.1.1.-" evidence="1"/>
<dbReference type="EMBL" id="CP000766">
    <property type="protein sequence ID" value="ABY73171.1"/>
    <property type="molecule type" value="Genomic_DNA"/>
</dbReference>
<dbReference type="RefSeq" id="WP_012151339.1">
    <property type="nucleotide sequence ID" value="NC_010263.3"/>
</dbReference>
<dbReference type="SMR" id="B0BVB1"/>
<dbReference type="GeneID" id="79937840"/>
<dbReference type="KEGG" id="rrj:RrIowa_1440"/>
<dbReference type="eggNOG" id="COG1005">
    <property type="taxonomic scope" value="Bacteria"/>
</dbReference>
<dbReference type="HOGENOM" id="CLU_015134_0_1_5"/>
<dbReference type="Proteomes" id="UP000000796">
    <property type="component" value="Chromosome"/>
</dbReference>
<dbReference type="GO" id="GO:0005886">
    <property type="term" value="C:plasma membrane"/>
    <property type="evidence" value="ECO:0007669"/>
    <property type="project" value="UniProtKB-SubCell"/>
</dbReference>
<dbReference type="GO" id="GO:0003954">
    <property type="term" value="F:NADH dehydrogenase activity"/>
    <property type="evidence" value="ECO:0007669"/>
    <property type="project" value="TreeGrafter"/>
</dbReference>
<dbReference type="GO" id="GO:0016655">
    <property type="term" value="F:oxidoreductase activity, acting on NAD(P)H, quinone or similar compound as acceptor"/>
    <property type="evidence" value="ECO:0007669"/>
    <property type="project" value="UniProtKB-UniRule"/>
</dbReference>
<dbReference type="GO" id="GO:0048038">
    <property type="term" value="F:quinone binding"/>
    <property type="evidence" value="ECO:0007669"/>
    <property type="project" value="UniProtKB-KW"/>
</dbReference>
<dbReference type="GO" id="GO:0009060">
    <property type="term" value="P:aerobic respiration"/>
    <property type="evidence" value="ECO:0007669"/>
    <property type="project" value="TreeGrafter"/>
</dbReference>
<dbReference type="HAMAP" id="MF_01350">
    <property type="entry name" value="NDH1_NuoH"/>
    <property type="match status" value="1"/>
</dbReference>
<dbReference type="InterPro" id="IPR001694">
    <property type="entry name" value="NADH_UbQ_OxRdtase_su1/FPO"/>
</dbReference>
<dbReference type="InterPro" id="IPR018086">
    <property type="entry name" value="NADH_UbQ_OxRdtase_su1_CS"/>
</dbReference>
<dbReference type="NCBIfam" id="NF004741">
    <property type="entry name" value="PRK06076.1-2"/>
    <property type="match status" value="1"/>
</dbReference>
<dbReference type="NCBIfam" id="NF004745">
    <property type="entry name" value="PRK06076.1-6"/>
    <property type="match status" value="1"/>
</dbReference>
<dbReference type="PANTHER" id="PTHR11432">
    <property type="entry name" value="NADH DEHYDROGENASE SUBUNIT 1"/>
    <property type="match status" value="1"/>
</dbReference>
<dbReference type="PANTHER" id="PTHR11432:SF3">
    <property type="entry name" value="NADH-UBIQUINONE OXIDOREDUCTASE CHAIN 1"/>
    <property type="match status" value="1"/>
</dbReference>
<dbReference type="Pfam" id="PF00146">
    <property type="entry name" value="NADHdh"/>
    <property type="match status" value="1"/>
</dbReference>
<dbReference type="PROSITE" id="PS00667">
    <property type="entry name" value="COMPLEX1_ND1_1"/>
    <property type="match status" value="1"/>
</dbReference>
<dbReference type="PROSITE" id="PS00668">
    <property type="entry name" value="COMPLEX1_ND1_2"/>
    <property type="match status" value="1"/>
</dbReference>
<proteinExistence type="inferred from homology"/>
<comment type="function">
    <text evidence="1">NDH-1 shuttles electrons from NADH, via FMN and iron-sulfur (Fe-S) centers, to quinones in the respiratory chain. The immediate electron acceptor for the enzyme in this species is believed to be ubiquinone. Couples the redox reaction to proton translocation (for every two electrons transferred, four hydrogen ions are translocated across the cytoplasmic membrane), and thus conserves the redox energy in a proton gradient. This subunit may bind ubiquinone.</text>
</comment>
<comment type="catalytic activity">
    <reaction evidence="1">
        <text>a quinone + NADH + 5 H(+)(in) = a quinol + NAD(+) + 4 H(+)(out)</text>
        <dbReference type="Rhea" id="RHEA:57888"/>
        <dbReference type="ChEBI" id="CHEBI:15378"/>
        <dbReference type="ChEBI" id="CHEBI:24646"/>
        <dbReference type="ChEBI" id="CHEBI:57540"/>
        <dbReference type="ChEBI" id="CHEBI:57945"/>
        <dbReference type="ChEBI" id="CHEBI:132124"/>
    </reaction>
</comment>
<comment type="subunit">
    <text evidence="1">NDH-1 is composed of 14 different subunits. Subunits NuoA, H, J, K, L, M, N constitute the membrane sector of the complex.</text>
</comment>
<comment type="subcellular location">
    <subcellularLocation>
        <location evidence="1">Cell inner membrane</location>
        <topology evidence="1">Multi-pass membrane protein</topology>
    </subcellularLocation>
</comment>
<comment type="similarity">
    <text evidence="1">Belongs to the complex I subunit 1 family.</text>
</comment>
<gene>
    <name evidence="1" type="primary">nuoH</name>
    <name type="ordered locus">RrIowa_1440</name>
</gene>
<protein>
    <recommendedName>
        <fullName evidence="1">NADH-quinone oxidoreductase subunit H</fullName>
        <ecNumber evidence="1">7.1.1.-</ecNumber>
    </recommendedName>
    <alternativeName>
        <fullName evidence="1">NADH dehydrogenase I subunit H</fullName>
    </alternativeName>
    <alternativeName>
        <fullName evidence="1">NDH-1 subunit H</fullName>
    </alternativeName>
</protein>
<organism>
    <name type="scientific">Rickettsia rickettsii (strain Iowa)</name>
    <dbReference type="NCBI Taxonomy" id="452659"/>
    <lineage>
        <taxon>Bacteria</taxon>
        <taxon>Pseudomonadati</taxon>
        <taxon>Pseudomonadota</taxon>
        <taxon>Alphaproteobacteria</taxon>
        <taxon>Rickettsiales</taxon>
        <taxon>Rickettsiaceae</taxon>
        <taxon>Rickettsieae</taxon>
        <taxon>Rickettsia</taxon>
        <taxon>spotted fever group</taxon>
    </lineage>
</organism>
<evidence type="ECO:0000255" key="1">
    <source>
        <dbReference type="HAMAP-Rule" id="MF_01350"/>
    </source>
</evidence>